<feature type="chain" id="PRO_0000290011" description="Tetraspanin-3">
    <location>
        <begin position="1"/>
        <end position="253"/>
    </location>
</feature>
<feature type="topological domain" description="Cytoplasmic" evidence="2">
    <location>
        <begin position="1"/>
        <end position="11"/>
    </location>
</feature>
<feature type="transmembrane region" description="Helical" evidence="2">
    <location>
        <begin position="12"/>
        <end position="32"/>
    </location>
</feature>
<feature type="topological domain" description="Extracellular" evidence="2">
    <location>
        <begin position="33"/>
        <end position="50"/>
    </location>
</feature>
<feature type="transmembrane region" description="Helical" evidence="2">
    <location>
        <begin position="51"/>
        <end position="71"/>
    </location>
</feature>
<feature type="topological domain" description="Cytoplasmic" evidence="2">
    <location>
        <begin position="72"/>
        <end position="85"/>
    </location>
</feature>
<feature type="transmembrane region" description="Helical" evidence="2">
    <location>
        <begin position="86"/>
        <end position="106"/>
    </location>
</feature>
<feature type="topological domain" description="Extracellular" evidence="2">
    <location>
        <begin position="107"/>
        <end position="212"/>
    </location>
</feature>
<feature type="transmembrane region" description="Helical" evidence="2">
    <location>
        <begin position="213"/>
        <end position="233"/>
    </location>
</feature>
<feature type="topological domain" description="Cytoplasmic" evidence="2">
    <location>
        <begin position="234"/>
        <end position="253"/>
    </location>
</feature>
<feature type="glycosylation site" description="N-linked (GlcNAc...) asparagine" evidence="2">
    <location>
        <position position="127"/>
    </location>
</feature>
<feature type="glycosylation site" description="N-linked (GlcNAc...) asparagine" evidence="2">
    <location>
        <position position="152"/>
    </location>
</feature>
<feature type="glycosylation site" description="N-linked (GlcNAc...) asparagine" evidence="2">
    <location>
        <position position="167"/>
    </location>
</feature>
<feature type="glycosylation site" description="N-linked (GlcNAc...) asparagine" evidence="2">
    <location>
        <position position="183"/>
    </location>
</feature>
<reference key="1">
    <citation type="submission" date="2004-11" db="EMBL/GenBank/DDBJ databases">
        <authorList>
            <consortium name="The German cDNA consortium"/>
        </authorList>
    </citation>
    <scope>NUCLEOTIDE SEQUENCE [LARGE SCALE MRNA]</scope>
    <source>
        <tissue>Kidney</tissue>
    </source>
</reference>
<keyword id="KW-0325">Glycoprotein</keyword>
<keyword id="KW-0472">Membrane</keyword>
<keyword id="KW-1185">Reference proteome</keyword>
<keyword id="KW-0812">Transmembrane</keyword>
<keyword id="KW-1133">Transmembrane helix</keyword>
<comment type="function">
    <text evidence="1">Regulates the proliferation and migration of oligodendrocytes, a process essential for normal myelination and repair.</text>
</comment>
<comment type="subunit">
    <text evidence="1">Interacts with claudin-11/CLDN11 and integrins.</text>
</comment>
<comment type="subcellular location">
    <subcellularLocation>
        <location evidence="3">Membrane</location>
        <topology evidence="3">Multi-pass membrane protein</topology>
    </subcellularLocation>
</comment>
<comment type="similarity">
    <text evidence="3">Belongs to the tetraspanin (TM4SF) family.</text>
</comment>
<dbReference type="EMBL" id="CR857728">
    <property type="protein sequence ID" value="CAH89996.1"/>
    <property type="molecule type" value="mRNA"/>
</dbReference>
<dbReference type="RefSeq" id="NP_001124946.1">
    <property type="nucleotide sequence ID" value="NM_001131474.2"/>
</dbReference>
<dbReference type="SMR" id="Q5RE11"/>
<dbReference type="FunCoup" id="Q5RE11">
    <property type="interactions" value="630"/>
</dbReference>
<dbReference type="STRING" id="9601.ENSPPYP00000007579"/>
<dbReference type="GlyCosmos" id="Q5RE11">
    <property type="glycosylation" value="4 sites, No reported glycans"/>
</dbReference>
<dbReference type="Ensembl" id="ENSPPYT00000041808.1">
    <property type="protein sequence ID" value="ENSPPYP00000032722.1"/>
    <property type="gene ID" value="ENSPPYG00000006680.3"/>
</dbReference>
<dbReference type="GeneID" id="100171818"/>
<dbReference type="KEGG" id="pon:100171818"/>
<dbReference type="CTD" id="10099"/>
<dbReference type="eggNOG" id="KOG3882">
    <property type="taxonomic scope" value="Eukaryota"/>
</dbReference>
<dbReference type="GeneTree" id="ENSGT00940000154954"/>
<dbReference type="HOGENOM" id="CLU_055524_5_2_1"/>
<dbReference type="InParanoid" id="Q5RE11"/>
<dbReference type="OrthoDB" id="9993879at2759"/>
<dbReference type="TreeFam" id="TF316345"/>
<dbReference type="Proteomes" id="UP000001595">
    <property type="component" value="Chromosome 15"/>
</dbReference>
<dbReference type="GO" id="GO:0005886">
    <property type="term" value="C:plasma membrane"/>
    <property type="evidence" value="ECO:0007669"/>
    <property type="project" value="TreeGrafter"/>
</dbReference>
<dbReference type="CDD" id="cd03163">
    <property type="entry name" value="TM4SF8_like_LEL"/>
    <property type="match status" value="1"/>
</dbReference>
<dbReference type="FunFam" id="1.10.1450.10:FF:000004">
    <property type="entry name" value="Tetraspanin"/>
    <property type="match status" value="1"/>
</dbReference>
<dbReference type="Gene3D" id="1.10.1450.10">
    <property type="entry name" value="Tetraspanin"/>
    <property type="match status" value="1"/>
</dbReference>
<dbReference type="InterPro" id="IPR018499">
    <property type="entry name" value="Tetraspanin/Peripherin"/>
</dbReference>
<dbReference type="InterPro" id="IPR000301">
    <property type="entry name" value="Tetraspanin_animals"/>
</dbReference>
<dbReference type="InterPro" id="IPR018503">
    <property type="entry name" value="Tetraspanin_CS"/>
</dbReference>
<dbReference type="InterPro" id="IPR008952">
    <property type="entry name" value="Tetraspanin_EC2_sf"/>
</dbReference>
<dbReference type="PANTHER" id="PTHR19282">
    <property type="entry name" value="TETRASPANIN"/>
    <property type="match status" value="1"/>
</dbReference>
<dbReference type="PANTHER" id="PTHR19282:SF48">
    <property type="entry name" value="TETRASPANIN-3"/>
    <property type="match status" value="1"/>
</dbReference>
<dbReference type="Pfam" id="PF00335">
    <property type="entry name" value="Tetraspanin"/>
    <property type="match status" value="1"/>
</dbReference>
<dbReference type="PIRSF" id="PIRSF002419">
    <property type="entry name" value="Tetraspanin"/>
    <property type="match status" value="1"/>
</dbReference>
<dbReference type="PRINTS" id="PR00259">
    <property type="entry name" value="TMFOUR"/>
</dbReference>
<dbReference type="SUPFAM" id="SSF48652">
    <property type="entry name" value="Tetraspanin"/>
    <property type="match status" value="1"/>
</dbReference>
<dbReference type="PROSITE" id="PS00421">
    <property type="entry name" value="TM4_1"/>
    <property type="match status" value="1"/>
</dbReference>
<gene>
    <name type="primary">TSPAN3</name>
</gene>
<protein>
    <recommendedName>
        <fullName>Tetraspanin-3</fullName>
        <shortName>Tspan-3</shortName>
    </recommendedName>
</protein>
<proteinExistence type="evidence at transcript level"/>
<evidence type="ECO:0000250" key="1"/>
<evidence type="ECO:0000255" key="2"/>
<evidence type="ECO:0000305" key="3"/>
<sequence>MGQCGITSSKTVLVFLNLIFWGAAGILCYVGAYVFITYDDYDHFFEDVYTLIPAVVIIAVGALLFIIGLIGCCATIRESRCGLATFVIILLLVFVTEVVVVVLGYVYRAKVENEVDRSIQKVYKTYNGTNPDAASRAIDYVQRQLHCCGIHNYSDWENTDWFKETKNQSVPLSCCRETASNCNGSLAHPSDLYAEGCEALVVKKLQEIMMHVIWAALAFAAIQLLGMLCACIVLCRRSRDPAYELLITGGTYA</sequence>
<organism>
    <name type="scientific">Pongo abelii</name>
    <name type="common">Sumatran orangutan</name>
    <name type="synonym">Pongo pygmaeus abelii</name>
    <dbReference type="NCBI Taxonomy" id="9601"/>
    <lineage>
        <taxon>Eukaryota</taxon>
        <taxon>Metazoa</taxon>
        <taxon>Chordata</taxon>
        <taxon>Craniata</taxon>
        <taxon>Vertebrata</taxon>
        <taxon>Euteleostomi</taxon>
        <taxon>Mammalia</taxon>
        <taxon>Eutheria</taxon>
        <taxon>Euarchontoglires</taxon>
        <taxon>Primates</taxon>
        <taxon>Haplorrhini</taxon>
        <taxon>Catarrhini</taxon>
        <taxon>Hominidae</taxon>
        <taxon>Pongo</taxon>
    </lineage>
</organism>
<accession>Q5RE11</accession>
<name>TSN3_PONAB</name>